<comment type="function">
    <text evidence="1">Positive regulator of sigma-B activity. Non-phosphorylated RsbV binds to RsbW, preventing its association with sigma-B. When phosphorylated, releases RsbW, which is then free to complex with and inactivate sigma-B (By similarity).</text>
</comment>
<comment type="PTM">
    <text evidence="1">Phosphorylated by RsbW on a serine residue.</text>
</comment>
<comment type="similarity">
    <text evidence="3">Belongs to the anti-sigma-factor antagonist family.</text>
</comment>
<name>RSBV_STAAW</name>
<gene>
    <name type="primary">rsbV</name>
    <name type="ordered locus">MW1990</name>
</gene>
<protein>
    <recommendedName>
        <fullName>Anti-sigma-B factor antagonist</fullName>
    </recommendedName>
    <alternativeName>
        <fullName>Anti-anti-sigma-B factor</fullName>
    </alternativeName>
</protein>
<dbReference type="EMBL" id="BA000033">
    <property type="protein sequence ID" value="BAB95855.1"/>
    <property type="molecule type" value="Genomic_DNA"/>
</dbReference>
<dbReference type="RefSeq" id="WP_001052491.1">
    <property type="nucleotide sequence ID" value="NC_003923.1"/>
</dbReference>
<dbReference type="SMR" id="P66839"/>
<dbReference type="KEGG" id="sam:MW1990"/>
<dbReference type="HOGENOM" id="CLU_115403_9_3_9"/>
<dbReference type="GO" id="GO:0043856">
    <property type="term" value="F:anti-sigma factor antagonist activity"/>
    <property type="evidence" value="ECO:0007669"/>
    <property type="project" value="InterPro"/>
</dbReference>
<dbReference type="CDD" id="cd07043">
    <property type="entry name" value="STAS_anti-anti-sigma_factors"/>
    <property type="match status" value="1"/>
</dbReference>
<dbReference type="FunFam" id="3.30.750.24:FF:000001">
    <property type="entry name" value="Anti-sigma factor antagonist"/>
    <property type="match status" value="1"/>
</dbReference>
<dbReference type="Gene3D" id="3.30.750.24">
    <property type="entry name" value="STAS domain"/>
    <property type="match status" value="1"/>
</dbReference>
<dbReference type="InterPro" id="IPR003658">
    <property type="entry name" value="Anti-sigma_ant"/>
</dbReference>
<dbReference type="InterPro" id="IPR002645">
    <property type="entry name" value="STAS_dom"/>
</dbReference>
<dbReference type="InterPro" id="IPR036513">
    <property type="entry name" value="STAS_dom_sf"/>
</dbReference>
<dbReference type="NCBIfam" id="TIGR00377">
    <property type="entry name" value="ant_ant_sig"/>
    <property type="match status" value="1"/>
</dbReference>
<dbReference type="PANTHER" id="PTHR33495">
    <property type="entry name" value="ANTI-SIGMA FACTOR ANTAGONIST TM_1081-RELATED-RELATED"/>
    <property type="match status" value="1"/>
</dbReference>
<dbReference type="PANTHER" id="PTHR33495:SF9">
    <property type="entry name" value="ANTI-SIGMA-B FACTOR ANTAGONIST"/>
    <property type="match status" value="1"/>
</dbReference>
<dbReference type="Pfam" id="PF01740">
    <property type="entry name" value="STAS"/>
    <property type="match status" value="1"/>
</dbReference>
<dbReference type="SUPFAM" id="SSF52091">
    <property type="entry name" value="SpoIIaa-like"/>
    <property type="match status" value="1"/>
</dbReference>
<dbReference type="PROSITE" id="PS50801">
    <property type="entry name" value="STAS"/>
    <property type="match status" value="1"/>
</dbReference>
<sequence>MNLNIETTTQDKFYEVKVGGELDVYTVPELEEVLTPMRQDGTRDIYVNLENVSYMDSTGLGLFVGTLKALNQNDKELYILGVSDRIGRLFEITGLKDLMHVNEGTEVE</sequence>
<feature type="chain" id="PRO_0000194193" description="Anti-sigma-B factor antagonist">
    <location>
        <begin position="1"/>
        <end position="108"/>
    </location>
</feature>
<feature type="domain" description="STAS" evidence="2">
    <location>
        <begin position="3"/>
        <end position="108"/>
    </location>
</feature>
<feature type="modified residue" description="Phosphoserine" evidence="1">
    <location>
        <position position="57"/>
    </location>
</feature>
<reference key="1">
    <citation type="journal article" date="2002" name="Lancet">
        <title>Genome and virulence determinants of high virulence community-acquired MRSA.</title>
        <authorList>
            <person name="Baba T."/>
            <person name="Takeuchi F."/>
            <person name="Kuroda M."/>
            <person name="Yuzawa H."/>
            <person name="Aoki K."/>
            <person name="Oguchi A."/>
            <person name="Nagai Y."/>
            <person name="Iwama N."/>
            <person name="Asano K."/>
            <person name="Naimi T."/>
            <person name="Kuroda H."/>
            <person name="Cui L."/>
            <person name="Yamamoto K."/>
            <person name="Hiramatsu K."/>
        </authorList>
    </citation>
    <scope>NUCLEOTIDE SEQUENCE [LARGE SCALE GENOMIC DNA]</scope>
    <source>
        <strain>MW2</strain>
    </source>
</reference>
<keyword id="KW-0597">Phosphoprotein</keyword>
<accession>P66839</accession>
<accession>Q925Z9</accession>
<evidence type="ECO:0000250" key="1"/>
<evidence type="ECO:0000255" key="2">
    <source>
        <dbReference type="PROSITE-ProRule" id="PRU00198"/>
    </source>
</evidence>
<evidence type="ECO:0000305" key="3"/>
<organism>
    <name type="scientific">Staphylococcus aureus (strain MW2)</name>
    <dbReference type="NCBI Taxonomy" id="196620"/>
    <lineage>
        <taxon>Bacteria</taxon>
        <taxon>Bacillati</taxon>
        <taxon>Bacillota</taxon>
        <taxon>Bacilli</taxon>
        <taxon>Bacillales</taxon>
        <taxon>Staphylococcaceae</taxon>
        <taxon>Staphylococcus</taxon>
    </lineage>
</organism>
<proteinExistence type="inferred from homology"/>